<reference key="1">
    <citation type="submission" date="2002-12" db="EMBL/GenBank/DDBJ databases">
        <title>Complete genome sequence of Vibrio vulnificus CMCP6.</title>
        <authorList>
            <person name="Rhee J.H."/>
            <person name="Kim S.Y."/>
            <person name="Chung S.S."/>
            <person name="Kim J.J."/>
            <person name="Moon Y.H."/>
            <person name="Jeong H."/>
            <person name="Choy H.E."/>
        </authorList>
    </citation>
    <scope>NUCLEOTIDE SEQUENCE [LARGE SCALE GENOMIC DNA]</scope>
    <source>
        <strain>CMCP6</strain>
    </source>
</reference>
<sequence>MTDTFQHISVLLHESIDGLAIKPDGIYIDGTFGRGGHSRTILSKLGEHGRLYSIDRDPQAIAEAGKIDDPRFTIIHGPFSGMANYAEQYDLVGKVDGVLLDLGVSSPQLDDAERGFSFMKDGPLDMRMDPTSGIPVSQWLMEADLDDITWVIREFGEDKHARRIAKAIVAHREDETKEPLTRTSQLAKLISEAAPKSFKEKKHPATRAFQAFRIYINSELEEIDTALKGAASILAPEGRLSVISFHSLEDRMVKRFMRKESKGPEVPHGIPLTEAQIKALGSANMKTVGKAIMPTAQEIELNPRSRSSVLRIAEKL</sequence>
<proteinExistence type="inferred from homology"/>
<feature type="chain" id="PRO_0000108745" description="Ribosomal RNA small subunit methyltransferase H">
    <location>
        <begin position="1"/>
        <end position="316"/>
    </location>
</feature>
<feature type="binding site" evidence="1">
    <location>
        <begin position="35"/>
        <end position="37"/>
    </location>
    <ligand>
        <name>S-adenosyl-L-methionine</name>
        <dbReference type="ChEBI" id="CHEBI:59789"/>
    </ligand>
</feature>
<feature type="binding site" evidence="1">
    <location>
        <position position="55"/>
    </location>
    <ligand>
        <name>S-adenosyl-L-methionine</name>
        <dbReference type="ChEBI" id="CHEBI:59789"/>
    </ligand>
</feature>
<feature type="binding site" evidence="1">
    <location>
        <position position="79"/>
    </location>
    <ligand>
        <name>S-adenosyl-L-methionine</name>
        <dbReference type="ChEBI" id="CHEBI:59789"/>
    </ligand>
</feature>
<feature type="binding site" evidence="1">
    <location>
        <position position="101"/>
    </location>
    <ligand>
        <name>S-adenosyl-L-methionine</name>
        <dbReference type="ChEBI" id="CHEBI:59789"/>
    </ligand>
</feature>
<feature type="binding site" evidence="1">
    <location>
        <position position="108"/>
    </location>
    <ligand>
        <name>S-adenosyl-L-methionine</name>
        <dbReference type="ChEBI" id="CHEBI:59789"/>
    </ligand>
</feature>
<dbReference type="EC" id="2.1.1.199" evidence="1"/>
<dbReference type="EMBL" id="AE016795">
    <property type="protein sequence ID" value="AAO09102.1"/>
    <property type="molecule type" value="Genomic_DNA"/>
</dbReference>
<dbReference type="RefSeq" id="WP_011078671.1">
    <property type="nucleotide sequence ID" value="NC_004459.3"/>
</dbReference>
<dbReference type="SMR" id="Q8DEK2"/>
<dbReference type="GeneID" id="93894898"/>
<dbReference type="KEGG" id="vvu:VV1_0586"/>
<dbReference type="HOGENOM" id="CLU_038422_2_0_6"/>
<dbReference type="Proteomes" id="UP000002275">
    <property type="component" value="Chromosome 1"/>
</dbReference>
<dbReference type="GO" id="GO:0005737">
    <property type="term" value="C:cytoplasm"/>
    <property type="evidence" value="ECO:0007669"/>
    <property type="project" value="UniProtKB-SubCell"/>
</dbReference>
<dbReference type="GO" id="GO:0071424">
    <property type="term" value="F:rRNA (cytosine-N4-)-methyltransferase activity"/>
    <property type="evidence" value="ECO:0007669"/>
    <property type="project" value="UniProtKB-UniRule"/>
</dbReference>
<dbReference type="GO" id="GO:0070475">
    <property type="term" value="P:rRNA base methylation"/>
    <property type="evidence" value="ECO:0007669"/>
    <property type="project" value="UniProtKB-UniRule"/>
</dbReference>
<dbReference type="FunFam" id="1.10.150.170:FF:000001">
    <property type="entry name" value="Ribosomal RNA small subunit methyltransferase H"/>
    <property type="match status" value="1"/>
</dbReference>
<dbReference type="Gene3D" id="1.10.150.170">
    <property type="entry name" value="Putative methyltransferase TM0872, insert domain"/>
    <property type="match status" value="1"/>
</dbReference>
<dbReference type="Gene3D" id="3.40.50.150">
    <property type="entry name" value="Vaccinia Virus protein VP39"/>
    <property type="match status" value="1"/>
</dbReference>
<dbReference type="HAMAP" id="MF_01007">
    <property type="entry name" value="16SrRNA_methyltr_H"/>
    <property type="match status" value="1"/>
</dbReference>
<dbReference type="InterPro" id="IPR002903">
    <property type="entry name" value="RsmH"/>
</dbReference>
<dbReference type="InterPro" id="IPR023397">
    <property type="entry name" value="SAM-dep_MeTrfase_MraW_recog"/>
</dbReference>
<dbReference type="InterPro" id="IPR029063">
    <property type="entry name" value="SAM-dependent_MTases_sf"/>
</dbReference>
<dbReference type="NCBIfam" id="TIGR00006">
    <property type="entry name" value="16S rRNA (cytosine(1402)-N(4))-methyltransferase RsmH"/>
    <property type="match status" value="1"/>
</dbReference>
<dbReference type="PANTHER" id="PTHR11265:SF0">
    <property type="entry name" value="12S RRNA N4-METHYLCYTIDINE METHYLTRANSFERASE"/>
    <property type="match status" value="1"/>
</dbReference>
<dbReference type="PANTHER" id="PTHR11265">
    <property type="entry name" value="S-ADENOSYL-METHYLTRANSFERASE MRAW"/>
    <property type="match status" value="1"/>
</dbReference>
<dbReference type="Pfam" id="PF01795">
    <property type="entry name" value="Methyltransf_5"/>
    <property type="match status" value="1"/>
</dbReference>
<dbReference type="PIRSF" id="PIRSF004486">
    <property type="entry name" value="MraW"/>
    <property type="match status" value="1"/>
</dbReference>
<dbReference type="SUPFAM" id="SSF81799">
    <property type="entry name" value="Putative methyltransferase TM0872, insert domain"/>
    <property type="match status" value="1"/>
</dbReference>
<dbReference type="SUPFAM" id="SSF53335">
    <property type="entry name" value="S-adenosyl-L-methionine-dependent methyltransferases"/>
    <property type="match status" value="1"/>
</dbReference>
<evidence type="ECO:0000255" key="1">
    <source>
        <dbReference type="HAMAP-Rule" id="MF_01007"/>
    </source>
</evidence>
<accession>Q8DEK2</accession>
<keyword id="KW-0963">Cytoplasm</keyword>
<keyword id="KW-0489">Methyltransferase</keyword>
<keyword id="KW-0698">rRNA processing</keyword>
<keyword id="KW-0949">S-adenosyl-L-methionine</keyword>
<keyword id="KW-0808">Transferase</keyword>
<comment type="function">
    <text evidence="1">Specifically methylates the N4 position of cytidine in position 1402 (C1402) of 16S rRNA.</text>
</comment>
<comment type="catalytic activity">
    <reaction evidence="1">
        <text>cytidine(1402) in 16S rRNA + S-adenosyl-L-methionine = N(4)-methylcytidine(1402) in 16S rRNA + S-adenosyl-L-homocysteine + H(+)</text>
        <dbReference type="Rhea" id="RHEA:42928"/>
        <dbReference type="Rhea" id="RHEA-COMP:10286"/>
        <dbReference type="Rhea" id="RHEA-COMP:10287"/>
        <dbReference type="ChEBI" id="CHEBI:15378"/>
        <dbReference type="ChEBI" id="CHEBI:57856"/>
        <dbReference type="ChEBI" id="CHEBI:59789"/>
        <dbReference type="ChEBI" id="CHEBI:74506"/>
        <dbReference type="ChEBI" id="CHEBI:82748"/>
        <dbReference type="EC" id="2.1.1.199"/>
    </reaction>
</comment>
<comment type="subcellular location">
    <subcellularLocation>
        <location evidence="1">Cytoplasm</location>
    </subcellularLocation>
</comment>
<comment type="similarity">
    <text evidence="1">Belongs to the methyltransferase superfamily. RsmH family.</text>
</comment>
<name>RSMH_VIBVU</name>
<gene>
    <name evidence="1" type="primary">rsmH</name>
    <name type="synonym">mraW</name>
    <name type="ordered locus">VV1_0586</name>
</gene>
<organism>
    <name type="scientific">Vibrio vulnificus (strain CMCP6)</name>
    <dbReference type="NCBI Taxonomy" id="216895"/>
    <lineage>
        <taxon>Bacteria</taxon>
        <taxon>Pseudomonadati</taxon>
        <taxon>Pseudomonadota</taxon>
        <taxon>Gammaproteobacteria</taxon>
        <taxon>Vibrionales</taxon>
        <taxon>Vibrionaceae</taxon>
        <taxon>Vibrio</taxon>
    </lineage>
</organism>
<protein>
    <recommendedName>
        <fullName evidence="1">Ribosomal RNA small subunit methyltransferase H</fullName>
        <ecNumber evidence="1">2.1.1.199</ecNumber>
    </recommendedName>
    <alternativeName>
        <fullName evidence="1">16S rRNA m(4)C1402 methyltransferase</fullName>
    </alternativeName>
    <alternativeName>
        <fullName evidence="1">rRNA (cytosine-N(4)-)-methyltransferase RsmH</fullName>
    </alternativeName>
</protein>